<keyword id="KW-1003">Cell membrane</keyword>
<keyword id="KW-0210">Decarboxylase</keyword>
<keyword id="KW-0444">Lipid biosynthesis</keyword>
<keyword id="KW-0443">Lipid metabolism</keyword>
<keyword id="KW-0456">Lyase</keyword>
<keyword id="KW-0472">Membrane</keyword>
<keyword id="KW-0594">Phospholipid biosynthesis</keyword>
<keyword id="KW-1208">Phospholipid metabolism</keyword>
<keyword id="KW-0670">Pyruvate</keyword>
<keyword id="KW-0865">Zymogen</keyword>
<proteinExistence type="inferred from homology"/>
<name>PSD_SODGM</name>
<evidence type="ECO:0000255" key="1">
    <source>
        <dbReference type="HAMAP-Rule" id="MF_00662"/>
    </source>
</evidence>
<feature type="chain" id="PRO_0000262163" description="Phosphatidylserine decarboxylase beta chain" evidence="1">
    <location>
        <begin position="1"/>
        <end position="253"/>
    </location>
</feature>
<feature type="chain" id="PRO_0000262164" description="Phosphatidylserine decarboxylase alpha chain" evidence="1">
    <location>
        <begin position="254"/>
        <end position="295"/>
    </location>
</feature>
<feature type="active site" description="Charge relay system; for autoendoproteolytic cleavage activity" evidence="1">
    <location>
        <position position="90"/>
    </location>
</feature>
<feature type="active site" description="Charge relay system; for autoendoproteolytic cleavage activity" evidence="1">
    <location>
        <position position="147"/>
    </location>
</feature>
<feature type="active site" description="Charge relay system; for autoendoproteolytic cleavage activity" evidence="1">
    <location>
        <position position="254"/>
    </location>
</feature>
<feature type="active site" description="Schiff-base intermediate with substrate; via pyruvic acid; for decarboxylase activity" evidence="1">
    <location>
        <position position="254"/>
    </location>
</feature>
<feature type="site" description="Cleavage (non-hydrolytic); by autocatalysis" evidence="1">
    <location>
        <begin position="253"/>
        <end position="254"/>
    </location>
</feature>
<feature type="modified residue" description="Pyruvic acid (Ser); by autocatalysis" evidence="1">
    <location>
        <position position="254"/>
    </location>
</feature>
<sequence length="295" mass="32939">MLDRIKIALQHLLPKRWLTELAGWGAERRGGWLTRGVITLFVRWYKVDMQEAQQPDVATYPTFNAFFVRPLRDEARPIDADPAVLVLPADGIISQLGPIEGEQVFQAKGHHYSLEALLAGNESMITRFRDGSFATTYLAPRDYHRVHMPCNGVLREMLYVPGELFSVNPLTAANIPNLFARNERIICLFDTDFGPMAQILVGATIVGSIETVWAGTVTPPREGIIKRWRYPQADADGAVVLLKGQEMGRFKLGSTVINLFAGKNVLLGEHLYTRYVTRVGQRLAHGIAQTDSPLT</sequence>
<comment type="function">
    <text evidence="1">Catalyzes the formation of phosphatidylethanolamine (PtdEtn) from phosphatidylserine (PtdSer).</text>
</comment>
<comment type="catalytic activity">
    <reaction evidence="1">
        <text>a 1,2-diacyl-sn-glycero-3-phospho-L-serine + H(+) = a 1,2-diacyl-sn-glycero-3-phosphoethanolamine + CO2</text>
        <dbReference type="Rhea" id="RHEA:20828"/>
        <dbReference type="ChEBI" id="CHEBI:15378"/>
        <dbReference type="ChEBI" id="CHEBI:16526"/>
        <dbReference type="ChEBI" id="CHEBI:57262"/>
        <dbReference type="ChEBI" id="CHEBI:64612"/>
        <dbReference type="EC" id="4.1.1.65"/>
    </reaction>
</comment>
<comment type="cofactor">
    <cofactor evidence="1">
        <name>pyruvate</name>
        <dbReference type="ChEBI" id="CHEBI:15361"/>
    </cofactor>
    <text evidence="1">Binds 1 pyruvoyl group covalently per subunit.</text>
</comment>
<comment type="pathway">
    <text evidence="1">Phospholipid metabolism; phosphatidylethanolamine biosynthesis; phosphatidylethanolamine from CDP-diacylglycerol: step 2/2.</text>
</comment>
<comment type="subunit">
    <text evidence="1">Heterodimer of a large membrane-associated beta subunit and a small pyruvoyl-containing alpha subunit.</text>
</comment>
<comment type="subcellular location">
    <subcellularLocation>
        <location evidence="1">Cell membrane</location>
        <topology evidence="1">Peripheral membrane protein</topology>
    </subcellularLocation>
</comment>
<comment type="PTM">
    <text evidence="1">Is synthesized initially as an inactive proenzyme. Formation of the active enzyme involves a self-maturation process in which the active site pyruvoyl group is generated from an internal serine residue via an autocatalytic post-translational modification. Two non-identical subunits are generated from the proenzyme in this reaction, and the pyruvate is formed at the N-terminus of the alpha chain, which is derived from the carboxyl end of the proenzyme. The autoendoproteolytic cleavage occurs by a canonical serine protease mechanism, in which the side chain hydroxyl group of the serine supplies its oxygen atom to form the C-terminus of the beta chain, while the remainder of the serine residue undergoes an oxidative deamination to produce ammonia and the pyruvoyl prosthetic group on the alpha chain. During this reaction, the Ser that is part of the protease active site of the proenzyme becomes the pyruvoyl prosthetic group, which constitutes an essential element of the active site of the mature decarboxylase.</text>
</comment>
<comment type="similarity">
    <text evidence="1">Belongs to the phosphatidylserine decarboxylase family. PSD-B subfamily. Prokaryotic type I sub-subfamily.</text>
</comment>
<accession>Q2NW88</accession>
<protein>
    <recommendedName>
        <fullName evidence="1">Phosphatidylserine decarboxylase proenzyme</fullName>
        <ecNumber evidence="1">4.1.1.65</ecNumber>
    </recommendedName>
    <component>
        <recommendedName>
            <fullName evidence="1">Phosphatidylserine decarboxylase alpha chain</fullName>
        </recommendedName>
    </component>
    <component>
        <recommendedName>
            <fullName evidence="1">Phosphatidylserine decarboxylase beta chain</fullName>
        </recommendedName>
    </component>
</protein>
<organism>
    <name type="scientific">Sodalis glossinidius (strain morsitans)</name>
    <dbReference type="NCBI Taxonomy" id="343509"/>
    <lineage>
        <taxon>Bacteria</taxon>
        <taxon>Pseudomonadati</taxon>
        <taxon>Pseudomonadota</taxon>
        <taxon>Gammaproteobacteria</taxon>
        <taxon>Enterobacterales</taxon>
        <taxon>Bruguierivoracaceae</taxon>
        <taxon>Sodalis</taxon>
    </lineage>
</organism>
<gene>
    <name evidence="1" type="primary">psd</name>
    <name type="ordered locus">SG0312</name>
</gene>
<reference key="1">
    <citation type="journal article" date="2006" name="Genome Res.">
        <title>Massive genome erosion and functional adaptations provide insights into the symbiotic lifestyle of Sodalis glossinidius in the tsetse host.</title>
        <authorList>
            <person name="Toh H."/>
            <person name="Weiss B.L."/>
            <person name="Perkin S.A.H."/>
            <person name="Yamashita A."/>
            <person name="Oshima K."/>
            <person name="Hattori M."/>
            <person name="Aksoy S."/>
        </authorList>
    </citation>
    <scope>NUCLEOTIDE SEQUENCE [LARGE SCALE GENOMIC DNA]</scope>
    <source>
        <strain>morsitans</strain>
    </source>
</reference>
<dbReference type="EC" id="4.1.1.65" evidence="1"/>
<dbReference type="EMBL" id="AP008232">
    <property type="protein sequence ID" value="BAE73587.1"/>
    <property type="molecule type" value="Genomic_DNA"/>
</dbReference>
<dbReference type="RefSeq" id="WP_011410175.1">
    <property type="nucleotide sequence ID" value="NC_007712.1"/>
</dbReference>
<dbReference type="SMR" id="Q2NW88"/>
<dbReference type="STRING" id="343509.SG0312"/>
<dbReference type="KEGG" id="sgl:SG0312"/>
<dbReference type="eggNOG" id="COG0688">
    <property type="taxonomic scope" value="Bacteria"/>
</dbReference>
<dbReference type="HOGENOM" id="CLU_029061_4_1_6"/>
<dbReference type="OrthoDB" id="9802030at2"/>
<dbReference type="BioCyc" id="SGLO343509:SGP1_RS02870-MONOMER"/>
<dbReference type="UniPathway" id="UPA00558">
    <property type="reaction ID" value="UER00616"/>
</dbReference>
<dbReference type="Proteomes" id="UP000001932">
    <property type="component" value="Chromosome"/>
</dbReference>
<dbReference type="GO" id="GO:0005886">
    <property type="term" value="C:plasma membrane"/>
    <property type="evidence" value="ECO:0007669"/>
    <property type="project" value="UniProtKB-SubCell"/>
</dbReference>
<dbReference type="GO" id="GO:0004609">
    <property type="term" value="F:phosphatidylserine decarboxylase activity"/>
    <property type="evidence" value="ECO:0007669"/>
    <property type="project" value="UniProtKB-UniRule"/>
</dbReference>
<dbReference type="GO" id="GO:0006646">
    <property type="term" value="P:phosphatidylethanolamine biosynthetic process"/>
    <property type="evidence" value="ECO:0007669"/>
    <property type="project" value="UniProtKB-UniRule"/>
</dbReference>
<dbReference type="HAMAP" id="MF_00662">
    <property type="entry name" value="PS_decarb_PSD_B_type1"/>
    <property type="match status" value="1"/>
</dbReference>
<dbReference type="InterPro" id="IPR003817">
    <property type="entry name" value="PS_Dcarbxylase"/>
</dbReference>
<dbReference type="InterPro" id="IPR033177">
    <property type="entry name" value="PSD-B"/>
</dbReference>
<dbReference type="InterPro" id="IPR033178">
    <property type="entry name" value="PSD_type1_pro"/>
</dbReference>
<dbReference type="NCBIfam" id="TIGR00163">
    <property type="entry name" value="PS_decarb"/>
    <property type="match status" value="1"/>
</dbReference>
<dbReference type="PANTHER" id="PTHR10067">
    <property type="entry name" value="PHOSPHATIDYLSERINE DECARBOXYLASE"/>
    <property type="match status" value="1"/>
</dbReference>
<dbReference type="PANTHER" id="PTHR10067:SF6">
    <property type="entry name" value="PHOSPHATIDYLSERINE DECARBOXYLASE PROENZYME, MITOCHONDRIAL"/>
    <property type="match status" value="1"/>
</dbReference>
<dbReference type="Pfam" id="PF02666">
    <property type="entry name" value="PS_Dcarbxylase"/>
    <property type="match status" value="1"/>
</dbReference>